<reference key="1">
    <citation type="submission" date="2005-03" db="EMBL/GenBank/DDBJ databases">
        <title>Brevibacillus brevis strain 47, complete genome.</title>
        <authorList>
            <person name="Hosoyama A."/>
            <person name="Yamada R."/>
            <person name="Hongo Y."/>
            <person name="Terui Y."/>
            <person name="Ankai A."/>
            <person name="Masuyama W."/>
            <person name="Sekiguchi M."/>
            <person name="Takeda T."/>
            <person name="Asano K."/>
            <person name="Ohji S."/>
            <person name="Ichikawa N."/>
            <person name="Narita S."/>
            <person name="Aoki N."/>
            <person name="Miura H."/>
            <person name="Matsushita S."/>
            <person name="Sekigawa T."/>
            <person name="Yamagata H."/>
            <person name="Yoshikawa H."/>
            <person name="Udaka S."/>
            <person name="Tanikawa S."/>
            <person name="Fujita N."/>
        </authorList>
    </citation>
    <scope>NUCLEOTIDE SEQUENCE [LARGE SCALE GENOMIC DNA]</scope>
    <source>
        <strain>47 / JCM 6285 / NBRC 100599</strain>
    </source>
</reference>
<protein>
    <recommendedName>
        <fullName evidence="1">Ribosome maturation factor RimP</fullName>
    </recommendedName>
</protein>
<evidence type="ECO:0000255" key="1">
    <source>
        <dbReference type="HAMAP-Rule" id="MF_01077"/>
    </source>
</evidence>
<dbReference type="EMBL" id="AP008955">
    <property type="protein sequence ID" value="BAH44414.1"/>
    <property type="molecule type" value="Genomic_DNA"/>
</dbReference>
<dbReference type="RefSeq" id="WP_015891716.1">
    <property type="nucleotide sequence ID" value="NC_012491.1"/>
</dbReference>
<dbReference type="SMR" id="C0ZF55"/>
<dbReference type="STRING" id="358681.BBR47_34370"/>
<dbReference type="KEGG" id="bbe:BBR47_34370"/>
<dbReference type="eggNOG" id="COG0779">
    <property type="taxonomic scope" value="Bacteria"/>
</dbReference>
<dbReference type="HOGENOM" id="CLU_070525_2_0_9"/>
<dbReference type="Proteomes" id="UP000001877">
    <property type="component" value="Chromosome"/>
</dbReference>
<dbReference type="GO" id="GO:0005829">
    <property type="term" value="C:cytosol"/>
    <property type="evidence" value="ECO:0007669"/>
    <property type="project" value="TreeGrafter"/>
</dbReference>
<dbReference type="GO" id="GO:0000028">
    <property type="term" value="P:ribosomal small subunit assembly"/>
    <property type="evidence" value="ECO:0007669"/>
    <property type="project" value="TreeGrafter"/>
</dbReference>
<dbReference type="GO" id="GO:0006412">
    <property type="term" value="P:translation"/>
    <property type="evidence" value="ECO:0007669"/>
    <property type="project" value="TreeGrafter"/>
</dbReference>
<dbReference type="CDD" id="cd01734">
    <property type="entry name" value="YlxS_C"/>
    <property type="match status" value="1"/>
</dbReference>
<dbReference type="FunFam" id="3.30.300.70:FF:000001">
    <property type="entry name" value="Ribosome maturation factor RimP"/>
    <property type="match status" value="1"/>
</dbReference>
<dbReference type="Gene3D" id="2.30.30.180">
    <property type="entry name" value="Ribosome maturation factor RimP, C-terminal domain"/>
    <property type="match status" value="1"/>
</dbReference>
<dbReference type="Gene3D" id="3.30.300.70">
    <property type="entry name" value="RimP-like superfamily, N-terminal"/>
    <property type="match status" value="1"/>
</dbReference>
<dbReference type="HAMAP" id="MF_01077">
    <property type="entry name" value="RimP"/>
    <property type="match status" value="1"/>
</dbReference>
<dbReference type="InterPro" id="IPR003728">
    <property type="entry name" value="Ribosome_maturation_RimP"/>
</dbReference>
<dbReference type="InterPro" id="IPR028998">
    <property type="entry name" value="RimP_C"/>
</dbReference>
<dbReference type="InterPro" id="IPR036847">
    <property type="entry name" value="RimP_C_sf"/>
</dbReference>
<dbReference type="InterPro" id="IPR028989">
    <property type="entry name" value="RimP_N"/>
</dbReference>
<dbReference type="InterPro" id="IPR035956">
    <property type="entry name" value="RimP_N_sf"/>
</dbReference>
<dbReference type="NCBIfam" id="NF000928">
    <property type="entry name" value="PRK00092.1-2"/>
    <property type="match status" value="1"/>
</dbReference>
<dbReference type="PANTHER" id="PTHR33867">
    <property type="entry name" value="RIBOSOME MATURATION FACTOR RIMP"/>
    <property type="match status" value="1"/>
</dbReference>
<dbReference type="PANTHER" id="PTHR33867:SF1">
    <property type="entry name" value="RIBOSOME MATURATION FACTOR RIMP"/>
    <property type="match status" value="1"/>
</dbReference>
<dbReference type="Pfam" id="PF17384">
    <property type="entry name" value="DUF150_C"/>
    <property type="match status" value="1"/>
</dbReference>
<dbReference type="Pfam" id="PF02576">
    <property type="entry name" value="RimP_N"/>
    <property type="match status" value="1"/>
</dbReference>
<dbReference type="SUPFAM" id="SSF74942">
    <property type="entry name" value="YhbC-like, C-terminal domain"/>
    <property type="match status" value="1"/>
</dbReference>
<dbReference type="SUPFAM" id="SSF75420">
    <property type="entry name" value="YhbC-like, N-terminal domain"/>
    <property type="match status" value="1"/>
</dbReference>
<organism>
    <name type="scientific">Brevibacillus brevis (strain 47 / JCM 6285 / NBRC 100599)</name>
    <dbReference type="NCBI Taxonomy" id="358681"/>
    <lineage>
        <taxon>Bacteria</taxon>
        <taxon>Bacillati</taxon>
        <taxon>Bacillota</taxon>
        <taxon>Bacilli</taxon>
        <taxon>Bacillales</taxon>
        <taxon>Paenibacillaceae</taxon>
        <taxon>Brevibacillus</taxon>
    </lineage>
</organism>
<feature type="chain" id="PRO_1000149783" description="Ribosome maturation factor RimP">
    <location>
        <begin position="1"/>
        <end position="152"/>
    </location>
</feature>
<gene>
    <name evidence="1" type="primary">rimP</name>
    <name type="ordered locus">BBR47_34370</name>
</gene>
<keyword id="KW-0963">Cytoplasm</keyword>
<keyword id="KW-1185">Reference proteome</keyword>
<keyword id="KW-0690">Ribosome biogenesis</keyword>
<comment type="function">
    <text evidence="1">Required for maturation of 30S ribosomal subunits.</text>
</comment>
<comment type="subcellular location">
    <subcellularLocation>
        <location evidence="1">Cytoplasm</location>
    </subcellularLocation>
</comment>
<comment type="similarity">
    <text evidence="1">Belongs to the RimP family.</text>
</comment>
<sequence>MSKVTGIVTELITPIVEEVGLELVDIEYKKEGSNWFLRVFIDNETGNIDIDDCRLVSEKLSEKLDEVDPIPTAYFLEVSSPGAERPLRKDKDFTKAVGRNVHITTKEPIEGATTFEGELVSYEDGKLTVKEAKKTYVISQEQIDTARMAIIF</sequence>
<accession>C0ZF55</accession>
<name>RIMP_BREBN</name>
<proteinExistence type="inferred from homology"/>